<gene>
    <name evidence="1" type="primary">smg</name>
    <name type="ordered locus">CBUD_2099</name>
</gene>
<comment type="similarity">
    <text evidence="1">Belongs to the Smg family.</text>
</comment>
<comment type="sequence caution" evidence="2">
    <conflict type="erroneous initiation">
        <sequence resource="EMBL-CDS" id="ABS77739"/>
    </conflict>
</comment>
<organism>
    <name type="scientific">Coxiella burnetii (strain Dugway 5J108-111)</name>
    <dbReference type="NCBI Taxonomy" id="434922"/>
    <lineage>
        <taxon>Bacteria</taxon>
        <taxon>Pseudomonadati</taxon>
        <taxon>Pseudomonadota</taxon>
        <taxon>Gammaproteobacteria</taxon>
        <taxon>Legionellales</taxon>
        <taxon>Coxiellaceae</taxon>
        <taxon>Coxiella</taxon>
    </lineage>
</organism>
<evidence type="ECO:0000255" key="1">
    <source>
        <dbReference type="HAMAP-Rule" id="MF_00598"/>
    </source>
</evidence>
<evidence type="ECO:0000305" key="2"/>
<protein>
    <recommendedName>
        <fullName evidence="1">Protein Smg homolog</fullName>
    </recommendedName>
</protein>
<accession>A9KH17</accession>
<sequence>MKDESVLNVLMYLFKNHMQENCTLDLGEKKLLVQLEELGFHRTVIDQALSWLNNLSYSAREPMQLPQKNSFRVFSDYECDLLDTECRRFLITLEQQAILNPHTRELVINQALELSCEGIDVSLLKWVTLMVLFNQSSEKEALASMELLVLDDTVGGIH</sequence>
<proteinExistence type="inferred from homology"/>
<feature type="chain" id="PRO_1000082444" description="Protein Smg homolog">
    <location>
        <begin position="1"/>
        <end position="158"/>
    </location>
</feature>
<dbReference type="EMBL" id="CP000733">
    <property type="protein sequence ID" value="ABS77739.2"/>
    <property type="status" value="ALT_INIT"/>
    <property type="molecule type" value="Genomic_DNA"/>
</dbReference>
<dbReference type="SMR" id="A9KH17"/>
<dbReference type="KEGG" id="cbd:CBUD_2099"/>
<dbReference type="HOGENOM" id="CLU_133242_0_0_6"/>
<dbReference type="Proteomes" id="UP000008555">
    <property type="component" value="Chromosome"/>
</dbReference>
<dbReference type="HAMAP" id="MF_00598">
    <property type="entry name" value="Smg"/>
    <property type="match status" value="1"/>
</dbReference>
<dbReference type="InterPro" id="IPR007456">
    <property type="entry name" value="Smg"/>
</dbReference>
<dbReference type="PANTHER" id="PTHR38692">
    <property type="entry name" value="PROTEIN SMG"/>
    <property type="match status" value="1"/>
</dbReference>
<dbReference type="PANTHER" id="PTHR38692:SF1">
    <property type="entry name" value="PROTEIN SMG"/>
    <property type="match status" value="1"/>
</dbReference>
<dbReference type="Pfam" id="PF04361">
    <property type="entry name" value="DUF494"/>
    <property type="match status" value="1"/>
</dbReference>
<name>SMG_COXBN</name>
<reference key="1">
    <citation type="journal article" date="2009" name="Infect. Immun.">
        <title>Comparative genomics reveal extensive transposon-mediated genomic plasticity and diversity among potential effector proteins within the genus Coxiella.</title>
        <authorList>
            <person name="Beare P.A."/>
            <person name="Unsworth N."/>
            <person name="Andoh M."/>
            <person name="Voth D.E."/>
            <person name="Omsland A."/>
            <person name="Gilk S.D."/>
            <person name="Williams K.P."/>
            <person name="Sobral B.W."/>
            <person name="Kupko J.J. III"/>
            <person name="Porcella S.F."/>
            <person name="Samuel J.E."/>
            <person name="Heinzen R.A."/>
        </authorList>
    </citation>
    <scope>NUCLEOTIDE SEQUENCE [LARGE SCALE GENOMIC DNA]</scope>
    <source>
        <strain>Dugway 5J108-111</strain>
    </source>
</reference>